<sequence>MKLNPNASSFVPKFVAKPAAPAPAAPVAVVAEPVAAPVVAEPTPTPAPVETKEEPTTTATTTSVSSIKTEEDLENIKPTESVYKVEDDDIEDDDEVDEVAEKIEQVVKVLPEDSREHLNIVFLGHVDAGKSTLSGSIMVLTGQVDPHTLAKYEREAKENHREGWIYAYIMDTNEEERTKGKTVEVGRAHFETTKKRYTILDAPGHRLYVPNMIIGAAQADVGILVISSKKGEFEAGVEGGQTIEHARLAKMIGIKYLVVFVNKMDEPTVKWSKARYDEITDKLTVHLKKCGWNPKKDFHFVPGSGYGTLNVLAPLAPGVCDWYSGPSLIGTLDNLSGMERNEGGALRIPITTSYKDRGIVNVIGKVESGTISVGQSIHIMPGKTKVEVISLTGDICSFKTARPGENITIALKGIEGDDSIRPGSILAEINRPVPVVSEIEAIVYILDMPEERRLFTPSFSAIFHAHTAVEDVTVKSLIATIDTKTSTEIKQKPTFCKVGDAVKCRLVLGRAVCLEEFTTNPQLARFTIRDSTKTIAFGKVINIGKKAKEEIARQTKA</sequence>
<gene>
    <name type="primary">erf3</name>
    <name type="ORF">DDB_G0277919</name>
</gene>
<reference key="1">
    <citation type="journal article" date="2003" name="Nucleic Acids Res.">
        <title>Assessing functional divergence in EF-1alpha and its paralogs in eukaryotes and archaebacteria.</title>
        <authorList>
            <person name="Inagaki Y."/>
            <person name="Blouin C."/>
            <person name="Susko E."/>
            <person name="Roger A.J."/>
        </authorList>
    </citation>
    <scope>NUCLEOTIDE SEQUENCE [MRNA]</scope>
</reference>
<reference key="2">
    <citation type="journal article" date="2005" name="Nature">
        <title>The genome of the social amoeba Dictyostelium discoideum.</title>
        <authorList>
            <person name="Eichinger L."/>
            <person name="Pachebat J.A."/>
            <person name="Gloeckner G."/>
            <person name="Rajandream M.A."/>
            <person name="Sucgang R."/>
            <person name="Berriman M."/>
            <person name="Song J."/>
            <person name="Olsen R."/>
            <person name="Szafranski K."/>
            <person name="Xu Q."/>
            <person name="Tunggal B."/>
            <person name="Kummerfeld S."/>
            <person name="Madera M."/>
            <person name="Konfortov B.A."/>
            <person name="Rivero F."/>
            <person name="Bankier A.T."/>
            <person name="Lehmann R."/>
            <person name="Hamlin N."/>
            <person name="Davies R."/>
            <person name="Gaudet P."/>
            <person name="Fey P."/>
            <person name="Pilcher K."/>
            <person name="Chen G."/>
            <person name="Saunders D."/>
            <person name="Sodergren E.J."/>
            <person name="Davis P."/>
            <person name="Kerhornou A."/>
            <person name="Nie X."/>
            <person name="Hall N."/>
            <person name="Anjard C."/>
            <person name="Hemphill L."/>
            <person name="Bason N."/>
            <person name="Farbrother P."/>
            <person name="Desany B."/>
            <person name="Just E."/>
            <person name="Morio T."/>
            <person name="Rost R."/>
            <person name="Churcher C.M."/>
            <person name="Cooper J."/>
            <person name="Haydock S."/>
            <person name="van Driessche N."/>
            <person name="Cronin A."/>
            <person name="Goodhead I."/>
            <person name="Muzny D.M."/>
            <person name="Mourier T."/>
            <person name="Pain A."/>
            <person name="Lu M."/>
            <person name="Harper D."/>
            <person name="Lindsay R."/>
            <person name="Hauser H."/>
            <person name="James K.D."/>
            <person name="Quiles M."/>
            <person name="Madan Babu M."/>
            <person name="Saito T."/>
            <person name="Buchrieser C."/>
            <person name="Wardroper A."/>
            <person name="Felder M."/>
            <person name="Thangavelu M."/>
            <person name="Johnson D."/>
            <person name="Knights A."/>
            <person name="Loulseged H."/>
            <person name="Mungall K.L."/>
            <person name="Oliver K."/>
            <person name="Price C."/>
            <person name="Quail M.A."/>
            <person name="Urushihara H."/>
            <person name="Hernandez J."/>
            <person name="Rabbinowitsch E."/>
            <person name="Steffen D."/>
            <person name="Sanders M."/>
            <person name="Ma J."/>
            <person name="Kohara Y."/>
            <person name="Sharp S."/>
            <person name="Simmonds M.N."/>
            <person name="Spiegler S."/>
            <person name="Tivey A."/>
            <person name="Sugano S."/>
            <person name="White B."/>
            <person name="Walker D."/>
            <person name="Woodward J.R."/>
            <person name="Winckler T."/>
            <person name="Tanaka Y."/>
            <person name="Shaulsky G."/>
            <person name="Schleicher M."/>
            <person name="Weinstock G.M."/>
            <person name="Rosenthal A."/>
            <person name="Cox E.C."/>
            <person name="Chisholm R.L."/>
            <person name="Gibbs R.A."/>
            <person name="Loomis W.F."/>
            <person name="Platzer M."/>
            <person name="Kay R.R."/>
            <person name="Williams J.G."/>
            <person name="Dear P.H."/>
            <person name="Noegel A.A."/>
            <person name="Barrell B.G."/>
            <person name="Kuspa A."/>
        </authorList>
    </citation>
    <scope>NUCLEOTIDE SEQUENCE [LARGE SCALE GENOMIC DNA]</scope>
    <source>
        <strain>AX4</strain>
    </source>
</reference>
<organism>
    <name type="scientific">Dictyostelium discoideum</name>
    <name type="common">Social amoeba</name>
    <dbReference type="NCBI Taxonomy" id="44689"/>
    <lineage>
        <taxon>Eukaryota</taxon>
        <taxon>Amoebozoa</taxon>
        <taxon>Evosea</taxon>
        <taxon>Eumycetozoa</taxon>
        <taxon>Dictyostelia</taxon>
        <taxon>Dictyosteliales</taxon>
        <taxon>Dictyosteliaceae</taxon>
        <taxon>Dictyostelium</taxon>
    </lineage>
</organism>
<proteinExistence type="evidence at transcript level"/>
<protein>
    <recommendedName>
        <fullName>Eukaryotic peptide chain release factor GTP-binding subunit</fullName>
    </recommendedName>
    <alternativeName>
        <fullName>ERF2</fullName>
    </alternativeName>
    <alternativeName>
        <fullName>Eukaryotic release factor 3</fullName>
        <shortName>ERF-3</shortName>
        <shortName>ERF3</shortName>
    </alternativeName>
    <alternativeName>
        <fullName>Polypeptide release factor 3</fullName>
    </alternativeName>
    <alternativeName>
        <fullName>Translation release factor 3</fullName>
    </alternativeName>
</protein>
<name>ERF3_DICDI</name>
<accession>Q7YZN9</accession>
<accession>Q54Y49</accession>
<evidence type="ECO:0000250" key="1"/>
<evidence type="ECO:0000255" key="2">
    <source>
        <dbReference type="PROSITE-ProRule" id="PRU01059"/>
    </source>
</evidence>
<evidence type="ECO:0000256" key="3">
    <source>
        <dbReference type="SAM" id="MobiDB-lite"/>
    </source>
</evidence>
<keyword id="KW-0963">Cytoplasm</keyword>
<keyword id="KW-0342">GTP-binding</keyword>
<keyword id="KW-0547">Nucleotide-binding</keyword>
<keyword id="KW-1185">Reference proteome</keyword>
<comment type="function">
    <text evidence="1">Involved in translation termination. Stimulates the activity of erf1. Binds guanine nucleotides (By similarity).</text>
</comment>
<comment type="subcellular location">
    <subcellularLocation>
        <location evidence="1">Cytoplasm</location>
    </subcellularLocation>
</comment>
<comment type="similarity">
    <text evidence="2">Belongs to the TRAFAC class translation factor GTPase superfamily. Classic translation factor GTPase family. ERF3 subfamily.</text>
</comment>
<dbReference type="EMBL" id="AY185331">
    <property type="protein sequence ID" value="AAO61461.1"/>
    <property type="molecule type" value="mRNA"/>
</dbReference>
<dbReference type="EMBL" id="AAFI02000023">
    <property type="protein sequence ID" value="EAL68132.1"/>
    <property type="molecule type" value="Genomic_DNA"/>
</dbReference>
<dbReference type="RefSeq" id="XP_642353.1">
    <property type="nucleotide sequence ID" value="XM_637261.1"/>
</dbReference>
<dbReference type="SMR" id="Q7YZN9"/>
<dbReference type="FunCoup" id="Q7YZN9">
    <property type="interactions" value="673"/>
</dbReference>
<dbReference type="STRING" id="44689.Q7YZN9"/>
<dbReference type="GlyGen" id="Q7YZN9">
    <property type="glycosylation" value="2 sites"/>
</dbReference>
<dbReference type="PaxDb" id="44689-DDB0214990"/>
<dbReference type="EnsemblProtists" id="EAL68132">
    <property type="protein sequence ID" value="EAL68132"/>
    <property type="gene ID" value="DDB_G0277919"/>
</dbReference>
<dbReference type="GeneID" id="8621558"/>
<dbReference type="KEGG" id="ddi:DDB_G0277919"/>
<dbReference type="dictyBase" id="DDB_G0277919">
    <property type="gene designation" value="eRF3"/>
</dbReference>
<dbReference type="VEuPathDB" id="AmoebaDB:DDB_G0277919"/>
<dbReference type="eggNOG" id="KOG0459">
    <property type="taxonomic scope" value="Eukaryota"/>
</dbReference>
<dbReference type="HOGENOM" id="CLU_007265_3_8_1"/>
<dbReference type="InParanoid" id="Q7YZN9"/>
<dbReference type="OMA" id="ARFDECT"/>
<dbReference type="PhylomeDB" id="Q7YZN9"/>
<dbReference type="Reactome" id="R-DDI-72764">
    <property type="pathway name" value="Eukaryotic Translation Termination"/>
</dbReference>
<dbReference type="Reactome" id="R-DDI-975956">
    <property type="pathway name" value="Nonsense Mediated Decay (NMD) independent of the Exon Junction Complex (EJC)"/>
</dbReference>
<dbReference type="Reactome" id="R-DDI-975957">
    <property type="pathway name" value="Nonsense Mediated Decay (NMD) enhanced by the Exon Junction Complex (EJC)"/>
</dbReference>
<dbReference type="PRO" id="PR:Q7YZN9"/>
<dbReference type="Proteomes" id="UP000002195">
    <property type="component" value="Chromosome 3"/>
</dbReference>
<dbReference type="GO" id="GO:0018444">
    <property type="term" value="C:translation release factor complex"/>
    <property type="evidence" value="ECO:0000318"/>
    <property type="project" value="GO_Central"/>
</dbReference>
<dbReference type="GO" id="GO:0005525">
    <property type="term" value="F:GTP binding"/>
    <property type="evidence" value="ECO:0007669"/>
    <property type="project" value="UniProtKB-KW"/>
</dbReference>
<dbReference type="GO" id="GO:0003924">
    <property type="term" value="F:GTPase activity"/>
    <property type="evidence" value="ECO:0000318"/>
    <property type="project" value="GO_Central"/>
</dbReference>
<dbReference type="GO" id="GO:0003747">
    <property type="term" value="F:translation release factor activity"/>
    <property type="evidence" value="ECO:0000318"/>
    <property type="project" value="GO_Central"/>
</dbReference>
<dbReference type="GO" id="GO:0033554">
    <property type="term" value="P:cellular response to stress"/>
    <property type="evidence" value="ECO:0000314"/>
    <property type="project" value="dictyBase"/>
</dbReference>
<dbReference type="GO" id="GO:0006412">
    <property type="term" value="P:translation"/>
    <property type="evidence" value="ECO:0000318"/>
    <property type="project" value="GO_Central"/>
</dbReference>
<dbReference type="CDD" id="cd01883">
    <property type="entry name" value="EF1_alpha"/>
    <property type="match status" value="1"/>
</dbReference>
<dbReference type="CDD" id="cd03704">
    <property type="entry name" value="eRF3_C_III"/>
    <property type="match status" value="1"/>
</dbReference>
<dbReference type="CDD" id="cd04089">
    <property type="entry name" value="eRF3_II"/>
    <property type="match status" value="1"/>
</dbReference>
<dbReference type="FunFam" id="2.40.30.10:FF:000020">
    <property type="entry name" value="Translation elongation factor EF-1"/>
    <property type="match status" value="1"/>
</dbReference>
<dbReference type="FunFam" id="3.40.50.300:FF:001202">
    <property type="entry name" value="Translation elongation factor EF-1 subunit alpha"/>
    <property type="match status" value="1"/>
</dbReference>
<dbReference type="Gene3D" id="3.40.50.300">
    <property type="entry name" value="P-loop containing nucleotide triphosphate hydrolases"/>
    <property type="match status" value="1"/>
</dbReference>
<dbReference type="Gene3D" id="2.40.30.10">
    <property type="entry name" value="Translation factors"/>
    <property type="match status" value="2"/>
</dbReference>
<dbReference type="InterPro" id="IPR004161">
    <property type="entry name" value="EFTu-like_2"/>
</dbReference>
<dbReference type="InterPro" id="IPR031157">
    <property type="entry name" value="G_TR_CS"/>
</dbReference>
<dbReference type="InterPro" id="IPR054696">
    <property type="entry name" value="GTP-eEF1A_C"/>
</dbReference>
<dbReference type="InterPro" id="IPR027417">
    <property type="entry name" value="P-loop_NTPase"/>
</dbReference>
<dbReference type="InterPro" id="IPR000795">
    <property type="entry name" value="T_Tr_GTP-bd_dom"/>
</dbReference>
<dbReference type="InterPro" id="IPR050100">
    <property type="entry name" value="TRAFAC_GTPase_members"/>
</dbReference>
<dbReference type="InterPro" id="IPR009000">
    <property type="entry name" value="Transl_B-barrel_sf"/>
</dbReference>
<dbReference type="InterPro" id="IPR009001">
    <property type="entry name" value="Transl_elong_EF1A/Init_IF2_C"/>
</dbReference>
<dbReference type="PANTHER" id="PTHR23115">
    <property type="entry name" value="TRANSLATION FACTOR"/>
    <property type="match status" value="1"/>
</dbReference>
<dbReference type="Pfam" id="PF22594">
    <property type="entry name" value="GTP-eEF1A_C"/>
    <property type="match status" value="1"/>
</dbReference>
<dbReference type="Pfam" id="PF00009">
    <property type="entry name" value="GTP_EFTU"/>
    <property type="match status" value="1"/>
</dbReference>
<dbReference type="Pfam" id="PF03144">
    <property type="entry name" value="GTP_EFTU_D2"/>
    <property type="match status" value="1"/>
</dbReference>
<dbReference type="PRINTS" id="PR00315">
    <property type="entry name" value="ELONGATNFCT"/>
</dbReference>
<dbReference type="SUPFAM" id="SSF50465">
    <property type="entry name" value="EF-Tu/eEF-1alpha/eIF2-gamma C-terminal domain"/>
    <property type="match status" value="1"/>
</dbReference>
<dbReference type="SUPFAM" id="SSF52540">
    <property type="entry name" value="P-loop containing nucleoside triphosphate hydrolases"/>
    <property type="match status" value="1"/>
</dbReference>
<dbReference type="SUPFAM" id="SSF50447">
    <property type="entry name" value="Translation proteins"/>
    <property type="match status" value="1"/>
</dbReference>
<dbReference type="PROSITE" id="PS00301">
    <property type="entry name" value="G_TR_1"/>
    <property type="match status" value="1"/>
</dbReference>
<dbReference type="PROSITE" id="PS51722">
    <property type="entry name" value="G_TR_2"/>
    <property type="match status" value="1"/>
</dbReference>
<feature type="chain" id="PRO_0000328333" description="Eukaryotic peptide chain release factor GTP-binding subunit">
    <location>
        <begin position="1"/>
        <end position="557"/>
    </location>
</feature>
<feature type="domain" description="tr-type G" evidence="2">
    <location>
        <begin position="115"/>
        <end position="342"/>
    </location>
</feature>
<feature type="region of interest" description="Disordered" evidence="3">
    <location>
        <begin position="40"/>
        <end position="71"/>
    </location>
</feature>
<feature type="region of interest" description="G1" evidence="2">
    <location>
        <begin position="124"/>
        <end position="131"/>
    </location>
</feature>
<feature type="region of interest" description="G2" evidence="2">
    <location>
        <begin position="180"/>
        <end position="184"/>
    </location>
</feature>
<feature type="region of interest" description="G3" evidence="2">
    <location>
        <begin position="201"/>
        <end position="204"/>
    </location>
</feature>
<feature type="region of interest" description="G4" evidence="2">
    <location>
        <begin position="262"/>
        <end position="265"/>
    </location>
</feature>
<feature type="region of interest" description="G5" evidence="2">
    <location>
        <begin position="304"/>
        <end position="306"/>
    </location>
</feature>
<feature type="binding site" evidence="1">
    <location>
        <begin position="124"/>
        <end position="131"/>
    </location>
    <ligand>
        <name>GTP</name>
        <dbReference type="ChEBI" id="CHEBI:37565"/>
    </ligand>
</feature>
<feature type="binding site" evidence="1">
    <location>
        <begin position="201"/>
        <end position="205"/>
    </location>
    <ligand>
        <name>GTP</name>
        <dbReference type="ChEBI" id="CHEBI:37565"/>
    </ligand>
</feature>
<feature type="binding site" evidence="1">
    <location>
        <begin position="262"/>
        <end position="265"/>
    </location>
    <ligand>
        <name>GTP</name>
        <dbReference type="ChEBI" id="CHEBI:37565"/>
    </ligand>
</feature>
<feature type="site" description="Interacts with GTP/GDP" evidence="1">
    <location>
        <position position="273"/>
    </location>
</feature>
<feature type="site" description="Interacts with GTP/GDP" evidence="1">
    <location>
        <position position="407"/>
    </location>
</feature>